<reference key="1">
    <citation type="journal article" date="2007" name="PLoS Genet.">
        <title>The complete genome sequence of Yersinia pseudotuberculosis IP31758, the causative agent of Far East scarlet-like fever.</title>
        <authorList>
            <person name="Eppinger M."/>
            <person name="Rosovitz M.J."/>
            <person name="Fricke W.F."/>
            <person name="Rasko D.A."/>
            <person name="Kokorina G."/>
            <person name="Fayolle C."/>
            <person name="Lindler L.E."/>
            <person name="Carniel E."/>
            <person name="Ravel J."/>
        </authorList>
    </citation>
    <scope>NUCLEOTIDE SEQUENCE [LARGE SCALE GENOMIC DNA]</scope>
    <source>
        <strain>IP 31758</strain>
    </source>
</reference>
<feature type="chain" id="PRO_1000058478" description="Inner membrane-spanning protein YciB">
    <location>
        <begin position="1"/>
        <end position="180"/>
    </location>
</feature>
<feature type="transmembrane region" description="Helical" evidence="1">
    <location>
        <begin position="22"/>
        <end position="42"/>
    </location>
</feature>
<feature type="transmembrane region" description="Helical" evidence="1">
    <location>
        <begin position="50"/>
        <end position="70"/>
    </location>
</feature>
<feature type="transmembrane region" description="Helical" evidence="1">
    <location>
        <begin position="72"/>
        <end position="92"/>
    </location>
</feature>
<feature type="transmembrane region" description="Helical" evidence="1">
    <location>
        <begin position="121"/>
        <end position="141"/>
    </location>
</feature>
<feature type="transmembrane region" description="Helical" evidence="1">
    <location>
        <begin position="149"/>
        <end position="169"/>
    </location>
</feature>
<protein>
    <recommendedName>
        <fullName evidence="1">Inner membrane-spanning protein YciB</fullName>
    </recommendedName>
</protein>
<sequence length="180" mass="20875">MKQLLDFLPLVVFFIFYKMYDIFVASGALIVATLVALAFTWLKYRKVEKMTLVTAAMVLVFGTLTLAFHSDLFIKWKVTVLYVLFALALLVSQWVMKKPLIQRMLGKELTLPDKVWSTLNLSWAIFFLVCGLLNIYVAFWLPQDIWVNFKVFGLTALTLIFTLISGVYIYRHMPEEQKKS</sequence>
<keyword id="KW-0997">Cell inner membrane</keyword>
<keyword id="KW-1003">Cell membrane</keyword>
<keyword id="KW-0472">Membrane</keyword>
<keyword id="KW-0812">Transmembrane</keyword>
<keyword id="KW-1133">Transmembrane helix</keyword>
<evidence type="ECO:0000255" key="1">
    <source>
        <dbReference type="HAMAP-Rule" id="MF_00189"/>
    </source>
</evidence>
<name>YCIB_YERP3</name>
<accession>A7FI41</accession>
<gene>
    <name evidence="1" type="primary">yciB</name>
    <name type="ordered locus">YpsIP31758_1944</name>
</gene>
<dbReference type="EMBL" id="CP000720">
    <property type="protein sequence ID" value="ABS48009.1"/>
    <property type="molecule type" value="Genomic_DNA"/>
</dbReference>
<dbReference type="RefSeq" id="WP_002210640.1">
    <property type="nucleotide sequence ID" value="NC_009708.1"/>
</dbReference>
<dbReference type="KEGG" id="ypi:YpsIP31758_1944"/>
<dbReference type="HOGENOM" id="CLU_089554_2_0_6"/>
<dbReference type="Proteomes" id="UP000002412">
    <property type="component" value="Chromosome"/>
</dbReference>
<dbReference type="GO" id="GO:0005886">
    <property type="term" value="C:plasma membrane"/>
    <property type="evidence" value="ECO:0007669"/>
    <property type="project" value="UniProtKB-SubCell"/>
</dbReference>
<dbReference type="HAMAP" id="MF_00189">
    <property type="entry name" value="YciB"/>
    <property type="match status" value="1"/>
</dbReference>
<dbReference type="InterPro" id="IPR006008">
    <property type="entry name" value="YciB"/>
</dbReference>
<dbReference type="NCBIfam" id="TIGR00997">
    <property type="entry name" value="ispZ"/>
    <property type="match status" value="1"/>
</dbReference>
<dbReference type="NCBIfam" id="NF001324">
    <property type="entry name" value="PRK00259.1-2"/>
    <property type="match status" value="1"/>
</dbReference>
<dbReference type="NCBIfam" id="NF001325">
    <property type="entry name" value="PRK00259.1-3"/>
    <property type="match status" value="1"/>
</dbReference>
<dbReference type="NCBIfam" id="NF001326">
    <property type="entry name" value="PRK00259.1-4"/>
    <property type="match status" value="1"/>
</dbReference>
<dbReference type="PANTHER" id="PTHR36917:SF1">
    <property type="entry name" value="INNER MEMBRANE-SPANNING PROTEIN YCIB"/>
    <property type="match status" value="1"/>
</dbReference>
<dbReference type="PANTHER" id="PTHR36917">
    <property type="entry name" value="INTRACELLULAR SEPTATION PROTEIN A-RELATED"/>
    <property type="match status" value="1"/>
</dbReference>
<dbReference type="Pfam" id="PF04279">
    <property type="entry name" value="IspA"/>
    <property type="match status" value="1"/>
</dbReference>
<proteinExistence type="inferred from homology"/>
<organism>
    <name type="scientific">Yersinia pseudotuberculosis serotype O:1b (strain IP 31758)</name>
    <dbReference type="NCBI Taxonomy" id="349747"/>
    <lineage>
        <taxon>Bacteria</taxon>
        <taxon>Pseudomonadati</taxon>
        <taxon>Pseudomonadota</taxon>
        <taxon>Gammaproteobacteria</taxon>
        <taxon>Enterobacterales</taxon>
        <taxon>Yersiniaceae</taxon>
        <taxon>Yersinia</taxon>
    </lineage>
</organism>
<comment type="function">
    <text evidence="1">Plays a role in cell envelope biogenesis, maintenance of cell envelope integrity and membrane homeostasis.</text>
</comment>
<comment type="subcellular location">
    <subcellularLocation>
        <location evidence="1">Cell inner membrane</location>
        <topology evidence="1">Multi-pass membrane protein</topology>
    </subcellularLocation>
</comment>
<comment type="similarity">
    <text evidence="1">Belongs to the YciB family.</text>
</comment>